<sequence>MSSRKIIHIDMDAFYASVELREQPHLKGRPVVVAWEGARSVICAASYEARQFGLHSAMSVATAKRLCPQAVYVPPHFDLYRQVSAQIHAVFRRYTDLIEPLSLDEAYLDVTRNFKNIPYASEVAKEIRAAIFAETGLTASAGIAPNKFLAKIASDWRKPNGQFVLPPHKVMAFLETLPLGKIPGVGKVTLKKMQSLGMQTAGDLRRFERGELLNHFGRYGYRLYDLARGTDERPVKAERECLQISTEITLPEDLPLEQAAGHLPHLAEDLWRQITRKNVEAQSVTLKLKTYDFRIITRTLTYSSVLPDCTALLQAAQMLMARVPPQTEDAFRLIGIGVGHLVPKNQQQDLWA</sequence>
<gene>
    <name evidence="1" type="primary">dinB</name>
    <name type="ordered locus">NMA1661</name>
</gene>
<keyword id="KW-0963">Cytoplasm</keyword>
<keyword id="KW-0227">DNA damage</keyword>
<keyword id="KW-0234">DNA repair</keyword>
<keyword id="KW-0235">DNA replication</keyword>
<keyword id="KW-0238">DNA-binding</keyword>
<keyword id="KW-0239">DNA-directed DNA polymerase</keyword>
<keyword id="KW-0460">Magnesium</keyword>
<keyword id="KW-0479">Metal-binding</keyword>
<keyword id="KW-0515">Mutator protein</keyword>
<keyword id="KW-0548">Nucleotidyltransferase</keyword>
<keyword id="KW-0808">Transferase</keyword>
<evidence type="ECO:0000255" key="1">
    <source>
        <dbReference type="HAMAP-Rule" id="MF_01113"/>
    </source>
</evidence>
<comment type="function">
    <text evidence="1">Poorly processive, error-prone DNA polymerase involved in untargeted mutagenesis. Copies undamaged DNA at stalled replication forks, which arise in vivo from mismatched or misaligned primer ends. These misaligned primers can be extended by PolIV. Exhibits no 3'-5' exonuclease (proofreading) activity. May be involved in translesional synthesis, in conjunction with the beta clamp from PolIII.</text>
</comment>
<comment type="catalytic activity">
    <reaction evidence="1">
        <text>DNA(n) + a 2'-deoxyribonucleoside 5'-triphosphate = DNA(n+1) + diphosphate</text>
        <dbReference type="Rhea" id="RHEA:22508"/>
        <dbReference type="Rhea" id="RHEA-COMP:17339"/>
        <dbReference type="Rhea" id="RHEA-COMP:17340"/>
        <dbReference type="ChEBI" id="CHEBI:33019"/>
        <dbReference type="ChEBI" id="CHEBI:61560"/>
        <dbReference type="ChEBI" id="CHEBI:173112"/>
        <dbReference type="EC" id="2.7.7.7"/>
    </reaction>
</comment>
<comment type="cofactor">
    <cofactor evidence="1">
        <name>Mg(2+)</name>
        <dbReference type="ChEBI" id="CHEBI:18420"/>
    </cofactor>
    <text evidence="1">Binds 2 magnesium ions per subunit.</text>
</comment>
<comment type="subunit">
    <text evidence="1">Monomer.</text>
</comment>
<comment type="subcellular location">
    <subcellularLocation>
        <location evidence="1">Cytoplasm</location>
    </subcellularLocation>
</comment>
<comment type="similarity">
    <text evidence="1">Belongs to the DNA polymerase type-Y family.</text>
</comment>
<proteinExistence type="inferred from homology"/>
<dbReference type="EC" id="2.7.7.7" evidence="1"/>
<dbReference type="EMBL" id="AJ391259">
    <property type="protein sequence ID" value="CAB72023.1"/>
    <property type="molecule type" value="Genomic_DNA"/>
</dbReference>
<dbReference type="EMBL" id="AL157959">
    <property type="protein sequence ID" value="CAM08795.1"/>
    <property type="molecule type" value="Genomic_DNA"/>
</dbReference>
<dbReference type="PIR" id="A81861">
    <property type="entry name" value="A81861"/>
</dbReference>
<dbReference type="RefSeq" id="WP_002247002.1">
    <property type="nucleotide sequence ID" value="NC_003116.1"/>
</dbReference>
<dbReference type="SMR" id="Q9JRG1"/>
<dbReference type="EnsemblBacteria" id="CAM08795">
    <property type="protein sequence ID" value="CAM08795"/>
    <property type="gene ID" value="NMA1661"/>
</dbReference>
<dbReference type="KEGG" id="nma:NMA1661"/>
<dbReference type="HOGENOM" id="CLU_012348_1_2_4"/>
<dbReference type="Proteomes" id="UP000000626">
    <property type="component" value="Chromosome"/>
</dbReference>
<dbReference type="GO" id="GO:0005829">
    <property type="term" value="C:cytosol"/>
    <property type="evidence" value="ECO:0007669"/>
    <property type="project" value="TreeGrafter"/>
</dbReference>
<dbReference type="GO" id="GO:0003684">
    <property type="term" value="F:damaged DNA binding"/>
    <property type="evidence" value="ECO:0007669"/>
    <property type="project" value="InterPro"/>
</dbReference>
<dbReference type="GO" id="GO:0003887">
    <property type="term" value="F:DNA-directed DNA polymerase activity"/>
    <property type="evidence" value="ECO:0007669"/>
    <property type="project" value="UniProtKB-UniRule"/>
</dbReference>
<dbReference type="GO" id="GO:0000287">
    <property type="term" value="F:magnesium ion binding"/>
    <property type="evidence" value="ECO:0007669"/>
    <property type="project" value="UniProtKB-UniRule"/>
</dbReference>
<dbReference type="GO" id="GO:0006261">
    <property type="term" value="P:DNA-templated DNA replication"/>
    <property type="evidence" value="ECO:0007669"/>
    <property type="project" value="UniProtKB-UniRule"/>
</dbReference>
<dbReference type="GO" id="GO:0042276">
    <property type="term" value="P:error-prone translesion synthesis"/>
    <property type="evidence" value="ECO:0007669"/>
    <property type="project" value="TreeGrafter"/>
</dbReference>
<dbReference type="GO" id="GO:0009432">
    <property type="term" value="P:SOS response"/>
    <property type="evidence" value="ECO:0007669"/>
    <property type="project" value="TreeGrafter"/>
</dbReference>
<dbReference type="CDD" id="cd03586">
    <property type="entry name" value="PolY_Pol_IV_kappa"/>
    <property type="match status" value="1"/>
</dbReference>
<dbReference type="FunFam" id="1.10.150.20:FF:000019">
    <property type="entry name" value="DNA polymerase IV"/>
    <property type="match status" value="1"/>
</dbReference>
<dbReference type="FunFam" id="3.30.1490.100:FF:000004">
    <property type="entry name" value="DNA polymerase IV"/>
    <property type="match status" value="1"/>
</dbReference>
<dbReference type="FunFam" id="3.30.70.270:FF:000070">
    <property type="entry name" value="DNA polymerase IV"/>
    <property type="match status" value="1"/>
</dbReference>
<dbReference type="FunFam" id="3.40.1170.60:FF:000001">
    <property type="entry name" value="DNA polymerase IV"/>
    <property type="match status" value="1"/>
</dbReference>
<dbReference type="Gene3D" id="3.30.70.270">
    <property type="match status" value="3"/>
</dbReference>
<dbReference type="Gene3D" id="3.40.1170.60">
    <property type="match status" value="1"/>
</dbReference>
<dbReference type="Gene3D" id="1.10.150.20">
    <property type="entry name" value="5' to 3' exonuclease, C-terminal subdomain"/>
    <property type="match status" value="1"/>
</dbReference>
<dbReference type="Gene3D" id="3.30.1490.100">
    <property type="entry name" value="DNA polymerase, Y-family, little finger domain"/>
    <property type="match status" value="1"/>
</dbReference>
<dbReference type="HAMAP" id="MF_01113">
    <property type="entry name" value="DNApol_IV"/>
    <property type="match status" value="1"/>
</dbReference>
<dbReference type="InterPro" id="IPR043502">
    <property type="entry name" value="DNA/RNA_pol_sf"/>
</dbReference>
<dbReference type="InterPro" id="IPR036775">
    <property type="entry name" value="DNA_pol_Y-fam_lit_finger_sf"/>
</dbReference>
<dbReference type="InterPro" id="IPR017961">
    <property type="entry name" value="DNA_pol_Y-fam_little_finger"/>
</dbReference>
<dbReference type="InterPro" id="IPR050116">
    <property type="entry name" value="DNA_polymerase-Y"/>
</dbReference>
<dbReference type="InterPro" id="IPR022880">
    <property type="entry name" value="DNApol_IV"/>
</dbReference>
<dbReference type="InterPro" id="IPR053848">
    <property type="entry name" value="IMS_HHH_1"/>
</dbReference>
<dbReference type="InterPro" id="IPR043128">
    <property type="entry name" value="Rev_trsase/Diguanyl_cyclase"/>
</dbReference>
<dbReference type="InterPro" id="IPR001126">
    <property type="entry name" value="UmuC"/>
</dbReference>
<dbReference type="NCBIfam" id="NF002677">
    <property type="entry name" value="PRK02406.1"/>
    <property type="match status" value="1"/>
</dbReference>
<dbReference type="PANTHER" id="PTHR11076:SF33">
    <property type="entry name" value="DNA POLYMERASE KAPPA"/>
    <property type="match status" value="1"/>
</dbReference>
<dbReference type="PANTHER" id="PTHR11076">
    <property type="entry name" value="DNA REPAIR POLYMERASE UMUC / TRANSFERASE FAMILY MEMBER"/>
    <property type="match status" value="1"/>
</dbReference>
<dbReference type="Pfam" id="PF00817">
    <property type="entry name" value="IMS"/>
    <property type="match status" value="1"/>
</dbReference>
<dbReference type="Pfam" id="PF11799">
    <property type="entry name" value="IMS_C"/>
    <property type="match status" value="1"/>
</dbReference>
<dbReference type="Pfam" id="PF21999">
    <property type="entry name" value="IMS_HHH_1"/>
    <property type="match status" value="1"/>
</dbReference>
<dbReference type="SUPFAM" id="SSF56672">
    <property type="entry name" value="DNA/RNA polymerases"/>
    <property type="match status" value="1"/>
</dbReference>
<dbReference type="SUPFAM" id="SSF100879">
    <property type="entry name" value="Lesion bypass DNA polymerase (Y-family), little finger domain"/>
    <property type="match status" value="1"/>
</dbReference>
<dbReference type="PROSITE" id="PS50173">
    <property type="entry name" value="UMUC"/>
    <property type="match status" value="1"/>
</dbReference>
<organism>
    <name type="scientific">Neisseria meningitidis serogroup A / serotype 4A (strain DSM 15465 / Z2491)</name>
    <dbReference type="NCBI Taxonomy" id="122587"/>
    <lineage>
        <taxon>Bacteria</taxon>
        <taxon>Pseudomonadati</taxon>
        <taxon>Pseudomonadota</taxon>
        <taxon>Betaproteobacteria</taxon>
        <taxon>Neisseriales</taxon>
        <taxon>Neisseriaceae</taxon>
        <taxon>Neisseria</taxon>
    </lineage>
</organism>
<reference key="1">
    <citation type="journal article" date="2000" name="Infect. Immun.">
        <title>Molecular and biological analysis of eight genetic islands that distinguish Neisseria meningitidis from the closely related pathogen Neisseria gonorrhoeae.</title>
        <authorList>
            <person name="Klee S.R."/>
            <person name="Nassif X."/>
            <person name="Kusecek B."/>
            <person name="Merker P."/>
            <person name="Beretti J.-L."/>
            <person name="Achtman M."/>
            <person name="Tinsley C.R."/>
        </authorList>
    </citation>
    <scope>NUCLEOTIDE SEQUENCE [GENOMIC DNA]</scope>
    <source>
        <strain>DSM 15465 / Z2491</strain>
    </source>
</reference>
<reference key="2">
    <citation type="journal article" date="2000" name="Nature">
        <title>Complete DNA sequence of a serogroup A strain of Neisseria meningitidis Z2491.</title>
        <authorList>
            <person name="Parkhill J."/>
            <person name="Achtman M."/>
            <person name="James K.D."/>
            <person name="Bentley S.D."/>
            <person name="Churcher C.M."/>
            <person name="Klee S.R."/>
            <person name="Morelli G."/>
            <person name="Basham D."/>
            <person name="Brown D."/>
            <person name="Chillingworth T."/>
            <person name="Davies R.M."/>
            <person name="Davis P."/>
            <person name="Devlin K."/>
            <person name="Feltwell T."/>
            <person name="Hamlin N."/>
            <person name="Holroyd S."/>
            <person name="Jagels K."/>
            <person name="Leather S."/>
            <person name="Moule S."/>
            <person name="Mungall K.L."/>
            <person name="Quail M.A."/>
            <person name="Rajandream M.A."/>
            <person name="Rutherford K.M."/>
            <person name="Simmonds M."/>
            <person name="Skelton J."/>
            <person name="Whitehead S."/>
            <person name="Spratt B.G."/>
            <person name="Barrell B.G."/>
        </authorList>
    </citation>
    <scope>NUCLEOTIDE SEQUENCE [LARGE SCALE GENOMIC DNA]</scope>
    <source>
        <strain>DSM 15465 / Z2491</strain>
    </source>
</reference>
<name>DPO4_NEIMA</name>
<protein>
    <recommendedName>
        <fullName evidence="1">DNA polymerase IV</fullName>
        <shortName evidence="1">Pol IV</shortName>
        <ecNumber evidence="1">2.7.7.7</ecNumber>
    </recommendedName>
</protein>
<feature type="chain" id="PRO_0000173928" description="DNA polymerase IV">
    <location>
        <begin position="1"/>
        <end position="352"/>
    </location>
</feature>
<feature type="domain" description="UmuC" evidence="1">
    <location>
        <begin position="6"/>
        <end position="186"/>
    </location>
</feature>
<feature type="active site" evidence="1">
    <location>
        <position position="105"/>
    </location>
</feature>
<feature type="binding site" evidence="1">
    <location>
        <position position="10"/>
    </location>
    <ligand>
        <name>Mg(2+)</name>
        <dbReference type="ChEBI" id="CHEBI:18420"/>
    </ligand>
</feature>
<feature type="binding site" evidence="1">
    <location>
        <position position="104"/>
    </location>
    <ligand>
        <name>Mg(2+)</name>
        <dbReference type="ChEBI" id="CHEBI:18420"/>
    </ligand>
</feature>
<feature type="site" description="Substrate discrimination" evidence="1">
    <location>
        <position position="15"/>
    </location>
</feature>
<accession>Q9JRG1</accession>
<accession>A1ISN6</accession>